<dbReference type="EC" id="2.1.1.166" evidence="1"/>
<dbReference type="EMBL" id="CP000478">
    <property type="protein sequence ID" value="ABK16692.1"/>
    <property type="molecule type" value="Genomic_DNA"/>
</dbReference>
<dbReference type="RefSeq" id="WP_011697863.1">
    <property type="nucleotide sequence ID" value="NC_008554.1"/>
</dbReference>
<dbReference type="SMR" id="A0LGZ0"/>
<dbReference type="FunCoup" id="A0LGZ0">
    <property type="interactions" value="432"/>
</dbReference>
<dbReference type="STRING" id="335543.Sfum_0997"/>
<dbReference type="KEGG" id="sfu:Sfum_0997"/>
<dbReference type="eggNOG" id="COG0293">
    <property type="taxonomic scope" value="Bacteria"/>
</dbReference>
<dbReference type="HOGENOM" id="CLU_009422_4_0_7"/>
<dbReference type="InParanoid" id="A0LGZ0"/>
<dbReference type="OrthoDB" id="9790080at2"/>
<dbReference type="Proteomes" id="UP000001784">
    <property type="component" value="Chromosome"/>
</dbReference>
<dbReference type="GO" id="GO:0005737">
    <property type="term" value="C:cytoplasm"/>
    <property type="evidence" value="ECO:0007669"/>
    <property type="project" value="UniProtKB-SubCell"/>
</dbReference>
<dbReference type="GO" id="GO:0008650">
    <property type="term" value="F:rRNA (uridine-2'-O-)-methyltransferase activity"/>
    <property type="evidence" value="ECO:0007669"/>
    <property type="project" value="UniProtKB-UniRule"/>
</dbReference>
<dbReference type="CDD" id="cd02440">
    <property type="entry name" value="AdoMet_MTases"/>
    <property type="match status" value="1"/>
</dbReference>
<dbReference type="Gene3D" id="3.40.50.150">
    <property type="entry name" value="Vaccinia Virus protein VP39"/>
    <property type="match status" value="1"/>
</dbReference>
<dbReference type="HAMAP" id="MF_01547">
    <property type="entry name" value="RNA_methyltr_E"/>
    <property type="match status" value="1"/>
</dbReference>
<dbReference type="InterPro" id="IPR050082">
    <property type="entry name" value="RNA_methyltr_RlmE"/>
</dbReference>
<dbReference type="InterPro" id="IPR002877">
    <property type="entry name" value="RNA_MeTrfase_FtsJ_dom"/>
</dbReference>
<dbReference type="InterPro" id="IPR015507">
    <property type="entry name" value="rRNA-MeTfrase_E"/>
</dbReference>
<dbReference type="InterPro" id="IPR029063">
    <property type="entry name" value="SAM-dependent_MTases_sf"/>
</dbReference>
<dbReference type="PANTHER" id="PTHR10920:SF13">
    <property type="entry name" value="PRE-RRNA 2'-O-RIBOSE RNA METHYLTRANSFERASE FTSJ3"/>
    <property type="match status" value="1"/>
</dbReference>
<dbReference type="PANTHER" id="PTHR10920">
    <property type="entry name" value="RIBOSOMAL RNA METHYLTRANSFERASE"/>
    <property type="match status" value="1"/>
</dbReference>
<dbReference type="Pfam" id="PF01728">
    <property type="entry name" value="FtsJ"/>
    <property type="match status" value="1"/>
</dbReference>
<dbReference type="PIRSF" id="PIRSF005461">
    <property type="entry name" value="23S_rRNA_mtase"/>
    <property type="match status" value="1"/>
</dbReference>
<dbReference type="SUPFAM" id="SSF53335">
    <property type="entry name" value="S-adenosyl-L-methionine-dependent methyltransferases"/>
    <property type="match status" value="1"/>
</dbReference>
<organism>
    <name type="scientific">Syntrophobacter fumaroxidans (strain DSM 10017 / MPOB)</name>
    <dbReference type="NCBI Taxonomy" id="335543"/>
    <lineage>
        <taxon>Bacteria</taxon>
        <taxon>Pseudomonadati</taxon>
        <taxon>Thermodesulfobacteriota</taxon>
        <taxon>Syntrophobacteria</taxon>
        <taxon>Syntrophobacterales</taxon>
        <taxon>Syntrophobacteraceae</taxon>
        <taxon>Syntrophobacter</taxon>
    </lineage>
</organism>
<sequence length="197" mass="22003">MSYTVRDHYFHKAKKEHYLARAVYKLQEIQDRYKILKPGNRVLDLGAAPGSWMQFAREIVGPSGLVVGVDLKGVEHRFPEGVVVLQGDVTDPELARSLSVEHGPFDVVLSDMAPSTSGIRVADSARSALLFESALEMARSALRPGGHFVAKLFQGAEFHVLLQAVKRDFEWVKVTKPDASRKQSKEIYVIGMRLRKS</sequence>
<evidence type="ECO:0000255" key="1">
    <source>
        <dbReference type="HAMAP-Rule" id="MF_01547"/>
    </source>
</evidence>
<reference key="1">
    <citation type="submission" date="2006-10" db="EMBL/GenBank/DDBJ databases">
        <title>Complete sequence of Syntrophobacter fumaroxidans MPOB.</title>
        <authorList>
            <consortium name="US DOE Joint Genome Institute"/>
            <person name="Copeland A."/>
            <person name="Lucas S."/>
            <person name="Lapidus A."/>
            <person name="Barry K."/>
            <person name="Detter J.C."/>
            <person name="Glavina del Rio T."/>
            <person name="Hammon N."/>
            <person name="Israni S."/>
            <person name="Pitluck S."/>
            <person name="Goltsman E.G."/>
            <person name="Martinez M."/>
            <person name="Schmutz J."/>
            <person name="Larimer F."/>
            <person name="Land M."/>
            <person name="Hauser L."/>
            <person name="Kyrpides N."/>
            <person name="Kim E."/>
            <person name="Boone D.R."/>
            <person name="Brockman F."/>
            <person name="Culley D."/>
            <person name="Ferry J."/>
            <person name="Gunsalus R."/>
            <person name="McInerney M.J."/>
            <person name="Morrison M."/>
            <person name="Plugge C."/>
            <person name="Rohlin L."/>
            <person name="Scholten J."/>
            <person name="Sieber J."/>
            <person name="Stams A.J.M."/>
            <person name="Worm P."/>
            <person name="Henstra A.M."/>
            <person name="Richardson P."/>
        </authorList>
    </citation>
    <scope>NUCLEOTIDE SEQUENCE [LARGE SCALE GENOMIC DNA]</scope>
    <source>
        <strain>DSM 10017 / MPOB</strain>
    </source>
</reference>
<comment type="function">
    <text evidence="1">Specifically methylates the uridine in position 2552 of 23S rRNA at the 2'-O position of the ribose in the fully assembled 50S ribosomal subunit.</text>
</comment>
<comment type="catalytic activity">
    <reaction evidence="1">
        <text>uridine(2552) in 23S rRNA + S-adenosyl-L-methionine = 2'-O-methyluridine(2552) in 23S rRNA + S-adenosyl-L-homocysteine + H(+)</text>
        <dbReference type="Rhea" id="RHEA:42720"/>
        <dbReference type="Rhea" id="RHEA-COMP:10202"/>
        <dbReference type="Rhea" id="RHEA-COMP:10203"/>
        <dbReference type="ChEBI" id="CHEBI:15378"/>
        <dbReference type="ChEBI" id="CHEBI:57856"/>
        <dbReference type="ChEBI" id="CHEBI:59789"/>
        <dbReference type="ChEBI" id="CHEBI:65315"/>
        <dbReference type="ChEBI" id="CHEBI:74478"/>
        <dbReference type="EC" id="2.1.1.166"/>
    </reaction>
</comment>
<comment type="subcellular location">
    <subcellularLocation>
        <location evidence="1">Cytoplasm</location>
    </subcellularLocation>
</comment>
<comment type="similarity">
    <text evidence="1">Belongs to the class I-like SAM-binding methyltransferase superfamily. RNA methyltransferase RlmE family.</text>
</comment>
<feature type="chain" id="PRO_0000282808" description="Ribosomal RNA large subunit methyltransferase E">
    <location>
        <begin position="1"/>
        <end position="197"/>
    </location>
</feature>
<feature type="active site" description="Proton acceptor" evidence="1">
    <location>
        <position position="151"/>
    </location>
</feature>
<feature type="binding site" evidence="1">
    <location>
        <position position="50"/>
    </location>
    <ligand>
        <name>S-adenosyl-L-methionine</name>
        <dbReference type="ChEBI" id="CHEBI:59789"/>
    </ligand>
</feature>
<feature type="binding site" evidence="1">
    <location>
        <position position="52"/>
    </location>
    <ligand>
        <name>S-adenosyl-L-methionine</name>
        <dbReference type="ChEBI" id="CHEBI:59789"/>
    </ligand>
</feature>
<feature type="binding site" evidence="1">
    <location>
        <position position="70"/>
    </location>
    <ligand>
        <name>S-adenosyl-L-methionine</name>
        <dbReference type="ChEBI" id="CHEBI:59789"/>
    </ligand>
</feature>
<feature type="binding site" evidence="1">
    <location>
        <position position="88"/>
    </location>
    <ligand>
        <name>S-adenosyl-L-methionine</name>
        <dbReference type="ChEBI" id="CHEBI:59789"/>
    </ligand>
</feature>
<feature type="binding site" evidence="1">
    <location>
        <position position="111"/>
    </location>
    <ligand>
        <name>S-adenosyl-L-methionine</name>
        <dbReference type="ChEBI" id="CHEBI:59789"/>
    </ligand>
</feature>
<protein>
    <recommendedName>
        <fullName evidence="1">Ribosomal RNA large subunit methyltransferase E</fullName>
        <ecNumber evidence="1">2.1.1.166</ecNumber>
    </recommendedName>
    <alternativeName>
        <fullName evidence="1">23S rRNA Um2552 methyltransferase</fullName>
    </alternativeName>
    <alternativeName>
        <fullName evidence="1">rRNA (uridine-2'-O-)-methyltransferase</fullName>
    </alternativeName>
</protein>
<accession>A0LGZ0</accession>
<gene>
    <name evidence="1" type="primary">rlmE</name>
    <name evidence="1" type="synonym">ftsJ</name>
    <name evidence="1" type="synonym">rrmJ</name>
    <name type="ordered locus">Sfum_0997</name>
</gene>
<keyword id="KW-0963">Cytoplasm</keyword>
<keyword id="KW-0489">Methyltransferase</keyword>
<keyword id="KW-1185">Reference proteome</keyword>
<keyword id="KW-0698">rRNA processing</keyword>
<keyword id="KW-0949">S-adenosyl-L-methionine</keyword>
<keyword id="KW-0808">Transferase</keyword>
<name>RLME_SYNFM</name>
<proteinExistence type="inferred from homology"/>